<feature type="chain" id="PRO_1000188469" description="UPF0597 protein YhaM">
    <location>
        <begin position="1"/>
        <end position="436"/>
    </location>
</feature>
<organism>
    <name type="scientific">Salmonella paratyphi C (strain RKS4594)</name>
    <dbReference type="NCBI Taxonomy" id="476213"/>
    <lineage>
        <taxon>Bacteria</taxon>
        <taxon>Pseudomonadati</taxon>
        <taxon>Pseudomonadota</taxon>
        <taxon>Gammaproteobacteria</taxon>
        <taxon>Enterobacterales</taxon>
        <taxon>Enterobacteriaceae</taxon>
        <taxon>Salmonella</taxon>
    </lineage>
</organism>
<sequence>MFESKINPLWQSFILAVQEEVKPALGCTEPISLALAAAAAAAELDGTVERIDAWVSPNLMKNGMGVTVPGTGMVGLPIAAALGVLGGDAKAGLEVLKDASAKAVADAKAMLAAGHVAVMLQEPCNDILFSRAKVYSGDSWACVTIVGDHTNIVRIETDKGVVFTQADNAQEEEKTSPLGVLSHTSLEEILAFVNAVPFDAIRFILDAARLNGALSQEGLRGSWGLHIGSTLAKQCDRGLLAKDLSTAILIRTSAASDARMGGATLPAMSNSGSGNQGITATVPVMVVAEHVGADDERLARALMLSHLSAIYIHHQLPRLSALCAATTAAMGAAAGMAWLIDGRYDTIAMAISSMIGDVSGMICDGASNSCAMKVSTSASAAWKAVLMALDDTAVTGNEGIVAHNVEQSIANLCSLACRSMQQTDKQIIEIMASKAH</sequence>
<reference key="1">
    <citation type="journal article" date="2009" name="PLoS ONE">
        <title>Salmonella paratyphi C: genetic divergence from Salmonella choleraesuis and pathogenic convergence with Salmonella typhi.</title>
        <authorList>
            <person name="Liu W.-Q."/>
            <person name="Feng Y."/>
            <person name="Wang Y."/>
            <person name="Zou Q.-H."/>
            <person name="Chen F."/>
            <person name="Guo J.-T."/>
            <person name="Peng Y.-H."/>
            <person name="Jin Y."/>
            <person name="Li Y.-G."/>
            <person name="Hu S.-N."/>
            <person name="Johnston R.N."/>
            <person name="Liu G.-R."/>
            <person name="Liu S.-L."/>
        </authorList>
    </citation>
    <scope>NUCLEOTIDE SEQUENCE [LARGE SCALE GENOMIC DNA]</scope>
    <source>
        <strain>RKS4594</strain>
    </source>
</reference>
<gene>
    <name evidence="1" type="primary">yhaM</name>
    <name type="ordered locus">SPC_3314</name>
</gene>
<accession>C0PZ11</accession>
<evidence type="ECO:0000255" key="1">
    <source>
        <dbReference type="HAMAP-Rule" id="MF_01845"/>
    </source>
</evidence>
<comment type="similarity">
    <text evidence="1">Belongs to the UPF0597 family.</text>
</comment>
<protein>
    <recommendedName>
        <fullName evidence="1">UPF0597 protein YhaM</fullName>
    </recommendedName>
</protein>
<name>YHAM_SALPC</name>
<dbReference type="EMBL" id="CP000857">
    <property type="protein sequence ID" value="ACN47399.1"/>
    <property type="molecule type" value="Genomic_DNA"/>
</dbReference>
<dbReference type="RefSeq" id="WP_000463087.1">
    <property type="nucleotide sequence ID" value="NC_012125.1"/>
</dbReference>
<dbReference type="SMR" id="C0PZ11"/>
<dbReference type="KEGG" id="sei:SPC_3314"/>
<dbReference type="HOGENOM" id="CLU_051840_0_0_6"/>
<dbReference type="Proteomes" id="UP000001599">
    <property type="component" value="Chromosome"/>
</dbReference>
<dbReference type="GO" id="GO:0080146">
    <property type="term" value="F:L-cysteine desulfhydrase activity"/>
    <property type="evidence" value="ECO:0007669"/>
    <property type="project" value="TreeGrafter"/>
</dbReference>
<dbReference type="GO" id="GO:0019450">
    <property type="term" value="P:L-cysteine catabolic process to pyruvate"/>
    <property type="evidence" value="ECO:0007669"/>
    <property type="project" value="TreeGrafter"/>
</dbReference>
<dbReference type="HAMAP" id="MF_01845">
    <property type="entry name" value="UPF0597"/>
    <property type="match status" value="1"/>
</dbReference>
<dbReference type="InterPro" id="IPR005130">
    <property type="entry name" value="Ser_deHydtase-like_asu"/>
</dbReference>
<dbReference type="InterPro" id="IPR021144">
    <property type="entry name" value="UPF0597"/>
</dbReference>
<dbReference type="PANTHER" id="PTHR30501">
    <property type="entry name" value="UPF0597 PROTEIN YHAM"/>
    <property type="match status" value="1"/>
</dbReference>
<dbReference type="PANTHER" id="PTHR30501:SF2">
    <property type="entry name" value="UPF0597 PROTEIN YHAM"/>
    <property type="match status" value="1"/>
</dbReference>
<dbReference type="Pfam" id="PF03313">
    <property type="entry name" value="SDH_alpha"/>
    <property type="match status" value="1"/>
</dbReference>
<dbReference type="PIRSF" id="PIRSF006054">
    <property type="entry name" value="UCP006054"/>
    <property type="match status" value="1"/>
</dbReference>
<proteinExistence type="inferred from homology"/>